<name>RNPH_NITEU</name>
<comment type="function">
    <text evidence="1">Phosphorolytic 3'-5' exoribonuclease that plays an important role in tRNA 3'-end maturation. Removes nucleotide residues following the 3'-CCA terminus of tRNAs; can also add nucleotides to the ends of RNA molecules by using nucleoside diphosphates as substrates, but this may not be physiologically important. Probably plays a role in initiation of 16S rRNA degradation (leading to ribosome degradation) during starvation.</text>
</comment>
<comment type="catalytic activity">
    <reaction evidence="1">
        <text>tRNA(n+1) + phosphate = tRNA(n) + a ribonucleoside 5'-diphosphate</text>
        <dbReference type="Rhea" id="RHEA:10628"/>
        <dbReference type="Rhea" id="RHEA-COMP:17343"/>
        <dbReference type="Rhea" id="RHEA-COMP:17344"/>
        <dbReference type="ChEBI" id="CHEBI:43474"/>
        <dbReference type="ChEBI" id="CHEBI:57930"/>
        <dbReference type="ChEBI" id="CHEBI:173114"/>
        <dbReference type="EC" id="2.7.7.56"/>
    </reaction>
</comment>
<comment type="subunit">
    <text evidence="1">Homohexameric ring arranged as a trimer of dimers.</text>
</comment>
<comment type="similarity">
    <text evidence="1">Belongs to the RNase PH family.</text>
</comment>
<evidence type="ECO:0000255" key="1">
    <source>
        <dbReference type="HAMAP-Rule" id="MF_00564"/>
    </source>
</evidence>
<protein>
    <recommendedName>
        <fullName evidence="1">Ribonuclease PH</fullName>
        <shortName evidence="1">RNase PH</shortName>
        <ecNumber evidence="1">2.7.7.56</ecNumber>
    </recommendedName>
    <alternativeName>
        <fullName evidence="1">tRNA nucleotidyltransferase</fullName>
    </alternativeName>
</protein>
<gene>
    <name evidence="1" type="primary">rph</name>
    <name type="ordered locus">NE0276</name>
</gene>
<sequence length="241" mass="26648">MPRCNNRAPAQMRPVRIIRHYVRHAEGSVLIEYGETRVICTASVIEKVPPFLKGAGQGWLTAEYGMLPRSTGERMQREAAKGKQSGRTMEIQRLIGRALRSILDLEKLGERTIQMDCDVIQADGGTRTASITGAFVALYDAIDYLRAERMISQNPIRDHVAAVSVGILKGQPLLDLDYLEDSGCDTDLNVVMTGSLGLVEVQGTAEKVVFSRQELDVMLNMAQQGLQELFDVQRKALETVA</sequence>
<organism>
    <name type="scientific">Nitrosomonas europaea (strain ATCC 19718 / CIP 103999 / KCTC 2705 / NBRC 14298)</name>
    <dbReference type="NCBI Taxonomy" id="228410"/>
    <lineage>
        <taxon>Bacteria</taxon>
        <taxon>Pseudomonadati</taxon>
        <taxon>Pseudomonadota</taxon>
        <taxon>Betaproteobacteria</taxon>
        <taxon>Nitrosomonadales</taxon>
        <taxon>Nitrosomonadaceae</taxon>
        <taxon>Nitrosomonas</taxon>
    </lineage>
</organism>
<feature type="chain" id="PRO_0000139915" description="Ribonuclease PH">
    <location>
        <begin position="1"/>
        <end position="241"/>
    </location>
</feature>
<feature type="binding site" evidence="1">
    <location>
        <position position="87"/>
    </location>
    <ligand>
        <name>phosphate</name>
        <dbReference type="ChEBI" id="CHEBI:43474"/>
        <note>substrate</note>
    </ligand>
</feature>
<feature type="binding site" evidence="1">
    <location>
        <begin position="125"/>
        <end position="127"/>
    </location>
    <ligand>
        <name>phosphate</name>
        <dbReference type="ChEBI" id="CHEBI:43474"/>
        <note>substrate</note>
    </ligand>
</feature>
<reference key="1">
    <citation type="journal article" date="2003" name="J. Bacteriol.">
        <title>Complete genome sequence of the ammonia-oxidizing bacterium and obligate chemolithoautotroph Nitrosomonas europaea.</title>
        <authorList>
            <person name="Chain P."/>
            <person name="Lamerdin J.E."/>
            <person name="Larimer F.W."/>
            <person name="Regala W."/>
            <person name="Lao V."/>
            <person name="Land M.L."/>
            <person name="Hauser L."/>
            <person name="Hooper A.B."/>
            <person name="Klotz M.G."/>
            <person name="Norton J."/>
            <person name="Sayavedra-Soto L.A."/>
            <person name="Arciero D.M."/>
            <person name="Hommes N.G."/>
            <person name="Whittaker M.M."/>
            <person name="Arp D.J."/>
        </authorList>
    </citation>
    <scope>NUCLEOTIDE SEQUENCE [LARGE SCALE GENOMIC DNA]</scope>
    <source>
        <strain>ATCC 19718 / CIP 103999 / KCTC 2705 / NBRC 14298</strain>
    </source>
</reference>
<accession>Q82XJ4</accession>
<keyword id="KW-0548">Nucleotidyltransferase</keyword>
<keyword id="KW-1185">Reference proteome</keyword>
<keyword id="KW-0694">RNA-binding</keyword>
<keyword id="KW-0698">rRNA processing</keyword>
<keyword id="KW-0808">Transferase</keyword>
<keyword id="KW-0819">tRNA processing</keyword>
<keyword id="KW-0820">tRNA-binding</keyword>
<dbReference type="EC" id="2.7.7.56" evidence="1"/>
<dbReference type="EMBL" id="AL954747">
    <property type="protein sequence ID" value="CAD84187.1"/>
    <property type="molecule type" value="Genomic_DNA"/>
</dbReference>
<dbReference type="RefSeq" id="WP_011110913.1">
    <property type="nucleotide sequence ID" value="NC_004757.1"/>
</dbReference>
<dbReference type="SMR" id="Q82XJ4"/>
<dbReference type="STRING" id="228410.NE0276"/>
<dbReference type="GeneID" id="87103481"/>
<dbReference type="KEGG" id="neu:NE0276"/>
<dbReference type="eggNOG" id="COG0689">
    <property type="taxonomic scope" value="Bacteria"/>
</dbReference>
<dbReference type="HOGENOM" id="CLU_050858_0_0_4"/>
<dbReference type="OrthoDB" id="9802265at2"/>
<dbReference type="PhylomeDB" id="Q82XJ4"/>
<dbReference type="Proteomes" id="UP000001416">
    <property type="component" value="Chromosome"/>
</dbReference>
<dbReference type="GO" id="GO:0000175">
    <property type="term" value="F:3'-5'-RNA exonuclease activity"/>
    <property type="evidence" value="ECO:0007669"/>
    <property type="project" value="UniProtKB-UniRule"/>
</dbReference>
<dbReference type="GO" id="GO:0000049">
    <property type="term" value="F:tRNA binding"/>
    <property type="evidence" value="ECO:0007669"/>
    <property type="project" value="UniProtKB-UniRule"/>
</dbReference>
<dbReference type="GO" id="GO:0009022">
    <property type="term" value="F:tRNA nucleotidyltransferase activity"/>
    <property type="evidence" value="ECO:0007669"/>
    <property type="project" value="UniProtKB-UniRule"/>
</dbReference>
<dbReference type="GO" id="GO:0016075">
    <property type="term" value="P:rRNA catabolic process"/>
    <property type="evidence" value="ECO:0007669"/>
    <property type="project" value="UniProtKB-UniRule"/>
</dbReference>
<dbReference type="GO" id="GO:0006364">
    <property type="term" value="P:rRNA processing"/>
    <property type="evidence" value="ECO:0007669"/>
    <property type="project" value="UniProtKB-KW"/>
</dbReference>
<dbReference type="GO" id="GO:0008033">
    <property type="term" value="P:tRNA processing"/>
    <property type="evidence" value="ECO:0007669"/>
    <property type="project" value="UniProtKB-UniRule"/>
</dbReference>
<dbReference type="CDD" id="cd11362">
    <property type="entry name" value="RNase_PH_bact"/>
    <property type="match status" value="1"/>
</dbReference>
<dbReference type="FunFam" id="3.30.230.70:FF:000003">
    <property type="entry name" value="Ribonuclease PH"/>
    <property type="match status" value="1"/>
</dbReference>
<dbReference type="Gene3D" id="3.30.230.70">
    <property type="entry name" value="GHMP Kinase, N-terminal domain"/>
    <property type="match status" value="1"/>
</dbReference>
<dbReference type="HAMAP" id="MF_00564">
    <property type="entry name" value="RNase_PH"/>
    <property type="match status" value="1"/>
</dbReference>
<dbReference type="InterPro" id="IPR001247">
    <property type="entry name" value="ExoRNase_PH_dom1"/>
</dbReference>
<dbReference type="InterPro" id="IPR015847">
    <property type="entry name" value="ExoRNase_PH_dom2"/>
</dbReference>
<dbReference type="InterPro" id="IPR036345">
    <property type="entry name" value="ExoRNase_PH_dom2_sf"/>
</dbReference>
<dbReference type="InterPro" id="IPR027408">
    <property type="entry name" value="PNPase/RNase_PH_dom_sf"/>
</dbReference>
<dbReference type="InterPro" id="IPR020568">
    <property type="entry name" value="Ribosomal_Su5_D2-typ_SF"/>
</dbReference>
<dbReference type="InterPro" id="IPR050080">
    <property type="entry name" value="RNase_PH"/>
</dbReference>
<dbReference type="InterPro" id="IPR002381">
    <property type="entry name" value="RNase_PH_bac-type"/>
</dbReference>
<dbReference type="InterPro" id="IPR018336">
    <property type="entry name" value="RNase_PH_CS"/>
</dbReference>
<dbReference type="NCBIfam" id="TIGR01966">
    <property type="entry name" value="RNasePH"/>
    <property type="match status" value="1"/>
</dbReference>
<dbReference type="PANTHER" id="PTHR11953">
    <property type="entry name" value="EXOSOME COMPLEX COMPONENT"/>
    <property type="match status" value="1"/>
</dbReference>
<dbReference type="PANTHER" id="PTHR11953:SF0">
    <property type="entry name" value="EXOSOME COMPLEX COMPONENT RRP41"/>
    <property type="match status" value="1"/>
</dbReference>
<dbReference type="Pfam" id="PF01138">
    <property type="entry name" value="RNase_PH"/>
    <property type="match status" value="1"/>
</dbReference>
<dbReference type="Pfam" id="PF03725">
    <property type="entry name" value="RNase_PH_C"/>
    <property type="match status" value="1"/>
</dbReference>
<dbReference type="SUPFAM" id="SSF55666">
    <property type="entry name" value="Ribonuclease PH domain 2-like"/>
    <property type="match status" value="1"/>
</dbReference>
<dbReference type="SUPFAM" id="SSF54211">
    <property type="entry name" value="Ribosomal protein S5 domain 2-like"/>
    <property type="match status" value="1"/>
</dbReference>
<dbReference type="PROSITE" id="PS01277">
    <property type="entry name" value="RIBONUCLEASE_PH"/>
    <property type="match status" value="1"/>
</dbReference>
<proteinExistence type="inferred from homology"/>